<sequence>MLKFEILATDTSSHARRGTLTLNHGVVQTPIFMPVGTYGTVKGVMPRSLREMGAQIILGNTFHLWMRPGLDVMQSFGGLHGFEQWDKPILTDSGGFQVWSLGSMRKITEEGVHFASPVNGDKLFMSPEVSMQIQTTLNSDIVMQLDECTPYETNGHKTTEAEARKSMEMSRRWAVRSKNEFERLGNPNALFGIVQGGMYKNLRQESLEALVEMDFPGYAVGGVSVGEPKDEMLDIMAHTPHRLPAHKPRYLMGVGTPEDLVEGVAQGVDMFDCVMPTRNARNGTLFTRYGDLKIRNARHKTDHQPLDPSCTCHACAGTEGVSWNDGGRGGFSRAYLHHLDRCGEMLGPMLTTIHNLHYYLNLMREVREALDAGQFGAFRARFKAERARGV</sequence>
<name>TGT_ACIET</name>
<protein>
    <recommendedName>
        <fullName evidence="1">Queuine tRNA-ribosyltransferase</fullName>
        <ecNumber evidence="1">2.4.2.29</ecNumber>
    </recommendedName>
    <alternativeName>
        <fullName evidence="1">Guanine insertion enzyme</fullName>
    </alternativeName>
    <alternativeName>
        <fullName evidence="1">tRNA-guanine transglycosylase</fullName>
    </alternativeName>
</protein>
<feature type="chain" id="PRO_1000197997" description="Queuine tRNA-ribosyltransferase">
    <location>
        <begin position="1"/>
        <end position="390"/>
    </location>
</feature>
<feature type="region of interest" description="RNA binding" evidence="1">
    <location>
        <begin position="253"/>
        <end position="259"/>
    </location>
</feature>
<feature type="region of interest" description="RNA binding; important for wobble base 34 recognition" evidence="1">
    <location>
        <begin position="277"/>
        <end position="281"/>
    </location>
</feature>
<feature type="active site" description="Proton acceptor" evidence="1">
    <location>
        <position position="92"/>
    </location>
</feature>
<feature type="active site" description="Nucleophile" evidence="1">
    <location>
        <position position="272"/>
    </location>
</feature>
<feature type="binding site" evidence="1">
    <location>
        <begin position="92"/>
        <end position="96"/>
    </location>
    <ligand>
        <name>substrate</name>
    </ligand>
</feature>
<feature type="binding site" evidence="1">
    <location>
        <position position="146"/>
    </location>
    <ligand>
        <name>substrate</name>
    </ligand>
</feature>
<feature type="binding site" evidence="1">
    <location>
        <position position="195"/>
    </location>
    <ligand>
        <name>substrate</name>
    </ligand>
</feature>
<feature type="binding site" evidence="1">
    <location>
        <position position="222"/>
    </location>
    <ligand>
        <name>substrate</name>
    </ligand>
</feature>
<feature type="binding site" evidence="1">
    <location>
        <position position="310"/>
    </location>
    <ligand>
        <name>Zn(2+)</name>
        <dbReference type="ChEBI" id="CHEBI:29105"/>
    </ligand>
</feature>
<feature type="binding site" evidence="1">
    <location>
        <position position="312"/>
    </location>
    <ligand>
        <name>Zn(2+)</name>
        <dbReference type="ChEBI" id="CHEBI:29105"/>
    </ligand>
</feature>
<feature type="binding site" evidence="1">
    <location>
        <position position="315"/>
    </location>
    <ligand>
        <name>Zn(2+)</name>
        <dbReference type="ChEBI" id="CHEBI:29105"/>
    </ligand>
</feature>
<feature type="binding site" evidence="1">
    <location>
        <position position="354"/>
    </location>
    <ligand>
        <name>Zn(2+)</name>
        <dbReference type="ChEBI" id="CHEBI:29105"/>
    </ligand>
</feature>
<keyword id="KW-0328">Glycosyltransferase</keyword>
<keyword id="KW-0479">Metal-binding</keyword>
<keyword id="KW-0671">Queuosine biosynthesis</keyword>
<keyword id="KW-1185">Reference proteome</keyword>
<keyword id="KW-0808">Transferase</keyword>
<keyword id="KW-0819">tRNA processing</keyword>
<keyword id="KW-0862">Zinc</keyword>
<comment type="function">
    <text evidence="1">Catalyzes the base-exchange of a guanine (G) residue with the queuine precursor 7-aminomethyl-7-deazaguanine (PreQ1) at position 34 (anticodon wobble position) in tRNAs with GU(N) anticodons (tRNA-Asp, -Asn, -His and -Tyr). Catalysis occurs through a double-displacement mechanism. The nucleophile active site attacks the C1' of nucleotide 34 to detach the guanine base from the RNA, forming a covalent enzyme-RNA intermediate. The proton acceptor active site deprotonates the incoming PreQ1, allowing a nucleophilic attack on the C1' of the ribose to form the product. After dissociation, two additional enzymatic reactions on the tRNA convert PreQ1 to queuine (Q), resulting in the hypermodified nucleoside queuosine (7-(((4,5-cis-dihydroxy-2-cyclopenten-1-yl)amino)methyl)-7-deazaguanosine).</text>
</comment>
<comment type="catalytic activity">
    <reaction evidence="1">
        <text>7-aminomethyl-7-carbaguanine + guanosine(34) in tRNA = 7-aminomethyl-7-carbaguanosine(34) in tRNA + guanine</text>
        <dbReference type="Rhea" id="RHEA:24104"/>
        <dbReference type="Rhea" id="RHEA-COMP:10341"/>
        <dbReference type="Rhea" id="RHEA-COMP:10342"/>
        <dbReference type="ChEBI" id="CHEBI:16235"/>
        <dbReference type="ChEBI" id="CHEBI:58703"/>
        <dbReference type="ChEBI" id="CHEBI:74269"/>
        <dbReference type="ChEBI" id="CHEBI:82833"/>
        <dbReference type="EC" id="2.4.2.29"/>
    </reaction>
</comment>
<comment type="cofactor">
    <cofactor evidence="1">
        <name>Zn(2+)</name>
        <dbReference type="ChEBI" id="CHEBI:29105"/>
    </cofactor>
    <text evidence="1">Binds 1 zinc ion per subunit.</text>
</comment>
<comment type="pathway">
    <text evidence="1">tRNA modification; tRNA-queuosine biosynthesis.</text>
</comment>
<comment type="subunit">
    <text evidence="1">Homodimer. Within each dimer, one monomer is responsible for RNA recognition and catalysis, while the other monomer binds to the replacement base PreQ1.</text>
</comment>
<comment type="similarity">
    <text evidence="1">Belongs to the queuine tRNA-ribosyltransferase family.</text>
</comment>
<reference key="1">
    <citation type="submission" date="2009-01" db="EMBL/GenBank/DDBJ databases">
        <title>Complete sequence of Diaphorobacter sp. TPSY.</title>
        <authorList>
            <consortium name="US DOE Joint Genome Institute"/>
            <person name="Lucas S."/>
            <person name="Copeland A."/>
            <person name="Lapidus A."/>
            <person name="Glavina del Rio T."/>
            <person name="Tice H."/>
            <person name="Bruce D."/>
            <person name="Goodwin L."/>
            <person name="Pitluck S."/>
            <person name="Chertkov O."/>
            <person name="Brettin T."/>
            <person name="Detter J.C."/>
            <person name="Han C."/>
            <person name="Larimer F."/>
            <person name="Land M."/>
            <person name="Hauser L."/>
            <person name="Kyrpides N."/>
            <person name="Mikhailova N."/>
            <person name="Coates J.D."/>
        </authorList>
    </citation>
    <scope>NUCLEOTIDE SEQUENCE [LARGE SCALE GENOMIC DNA]</scope>
    <source>
        <strain>TPSY</strain>
    </source>
</reference>
<accession>B9MGI1</accession>
<gene>
    <name evidence="1" type="primary">tgt</name>
    <name type="ordered locus">Dtpsy_3143</name>
</gene>
<organism>
    <name type="scientific">Acidovorax ebreus (strain TPSY)</name>
    <name type="common">Diaphorobacter sp. (strain TPSY)</name>
    <dbReference type="NCBI Taxonomy" id="535289"/>
    <lineage>
        <taxon>Bacteria</taxon>
        <taxon>Pseudomonadati</taxon>
        <taxon>Pseudomonadota</taxon>
        <taxon>Betaproteobacteria</taxon>
        <taxon>Burkholderiales</taxon>
        <taxon>Comamonadaceae</taxon>
        <taxon>Diaphorobacter</taxon>
    </lineage>
</organism>
<proteinExistence type="inferred from homology"/>
<evidence type="ECO:0000255" key="1">
    <source>
        <dbReference type="HAMAP-Rule" id="MF_00168"/>
    </source>
</evidence>
<dbReference type="EC" id="2.4.2.29" evidence="1"/>
<dbReference type="EMBL" id="CP001392">
    <property type="protein sequence ID" value="ACM34576.1"/>
    <property type="molecule type" value="Genomic_DNA"/>
</dbReference>
<dbReference type="RefSeq" id="WP_015914401.1">
    <property type="nucleotide sequence ID" value="NC_011992.1"/>
</dbReference>
<dbReference type="SMR" id="B9MGI1"/>
<dbReference type="GeneID" id="84683831"/>
<dbReference type="KEGG" id="dia:Dtpsy_3143"/>
<dbReference type="eggNOG" id="COG0343">
    <property type="taxonomic scope" value="Bacteria"/>
</dbReference>
<dbReference type="HOGENOM" id="CLU_022060_0_1_4"/>
<dbReference type="UniPathway" id="UPA00392"/>
<dbReference type="Proteomes" id="UP000000450">
    <property type="component" value="Chromosome"/>
</dbReference>
<dbReference type="GO" id="GO:0005829">
    <property type="term" value="C:cytosol"/>
    <property type="evidence" value="ECO:0007669"/>
    <property type="project" value="TreeGrafter"/>
</dbReference>
<dbReference type="GO" id="GO:0046872">
    <property type="term" value="F:metal ion binding"/>
    <property type="evidence" value="ECO:0007669"/>
    <property type="project" value="UniProtKB-KW"/>
</dbReference>
<dbReference type="GO" id="GO:0008479">
    <property type="term" value="F:tRNA-guanosine(34) queuine transglycosylase activity"/>
    <property type="evidence" value="ECO:0007669"/>
    <property type="project" value="UniProtKB-UniRule"/>
</dbReference>
<dbReference type="GO" id="GO:0008616">
    <property type="term" value="P:queuosine biosynthetic process"/>
    <property type="evidence" value="ECO:0007669"/>
    <property type="project" value="UniProtKB-UniRule"/>
</dbReference>
<dbReference type="GO" id="GO:0002099">
    <property type="term" value="P:tRNA wobble guanine modification"/>
    <property type="evidence" value="ECO:0007669"/>
    <property type="project" value="TreeGrafter"/>
</dbReference>
<dbReference type="GO" id="GO:0101030">
    <property type="term" value="P:tRNA-guanine transglycosylation"/>
    <property type="evidence" value="ECO:0007669"/>
    <property type="project" value="InterPro"/>
</dbReference>
<dbReference type="FunFam" id="3.20.20.105:FF:000001">
    <property type="entry name" value="Queuine tRNA-ribosyltransferase"/>
    <property type="match status" value="1"/>
</dbReference>
<dbReference type="Gene3D" id="3.20.20.105">
    <property type="entry name" value="Queuine tRNA-ribosyltransferase-like"/>
    <property type="match status" value="1"/>
</dbReference>
<dbReference type="HAMAP" id="MF_00168">
    <property type="entry name" value="Q_tRNA_Tgt"/>
    <property type="match status" value="1"/>
</dbReference>
<dbReference type="InterPro" id="IPR050076">
    <property type="entry name" value="ArchSynthase1/Queuine_TRR"/>
</dbReference>
<dbReference type="InterPro" id="IPR004803">
    <property type="entry name" value="TGT"/>
</dbReference>
<dbReference type="InterPro" id="IPR036511">
    <property type="entry name" value="TGT-like_sf"/>
</dbReference>
<dbReference type="InterPro" id="IPR002616">
    <property type="entry name" value="tRNA_ribo_trans-like"/>
</dbReference>
<dbReference type="NCBIfam" id="TIGR00430">
    <property type="entry name" value="Q_tRNA_tgt"/>
    <property type="match status" value="1"/>
</dbReference>
<dbReference type="NCBIfam" id="TIGR00449">
    <property type="entry name" value="tgt_general"/>
    <property type="match status" value="1"/>
</dbReference>
<dbReference type="PANTHER" id="PTHR46499">
    <property type="entry name" value="QUEUINE TRNA-RIBOSYLTRANSFERASE"/>
    <property type="match status" value="1"/>
</dbReference>
<dbReference type="PANTHER" id="PTHR46499:SF1">
    <property type="entry name" value="QUEUINE TRNA-RIBOSYLTRANSFERASE"/>
    <property type="match status" value="1"/>
</dbReference>
<dbReference type="Pfam" id="PF01702">
    <property type="entry name" value="TGT"/>
    <property type="match status" value="1"/>
</dbReference>
<dbReference type="SUPFAM" id="SSF51713">
    <property type="entry name" value="tRNA-guanine transglycosylase"/>
    <property type="match status" value="1"/>
</dbReference>